<keyword id="KW-0687">Ribonucleoprotein</keyword>
<keyword id="KW-0689">Ribosomal protein</keyword>
<keyword id="KW-0694">RNA-binding</keyword>
<keyword id="KW-0699">rRNA-binding</keyword>
<proteinExistence type="inferred from homology"/>
<dbReference type="EMBL" id="CP000051">
    <property type="protein sequence ID" value="AAX50793.1"/>
    <property type="molecule type" value="Genomic_DNA"/>
</dbReference>
<dbReference type="RefSeq" id="WP_010725233.1">
    <property type="nucleotide sequence ID" value="NC_007429.1"/>
</dbReference>
<dbReference type="SMR" id="Q3KLH9"/>
<dbReference type="KEGG" id="cta:CTA_0567"/>
<dbReference type="HOGENOM" id="CLU_095071_2_1_0"/>
<dbReference type="Proteomes" id="UP000002532">
    <property type="component" value="Chromosome"/>
</dbReference>
<dbReference type="GO" id="GO:0022625">
    <property type="term" value="C:cytosolic large ribosomal subunit"/>
    <property type="evidence" value="ECO:0007669"/>
    <property type="project" value="TreeGrafter"/>
</dbReference>
<dbReference type="GO" id="GO:0070180">
    <property type="term" value="F:large ribosomal subunit rRNA binding"/>
    <property type="evidence" value="ECO:0007669"/>
    <property type="project" value="TreeGrafter"/>
</dbReference>
<dbReference type="GO" id="GO:0003735">
    <property type="term" value="F:structural constituent of ribosome"/>
    <property type="evidence" value="ECO:0007669"/>
    <property type="project" value="InterPro"/>
</dbReference>
<dbReference type="GO" id="GO:0006412">
    <property type="term" value="P:translation"/>
    <property type="evidence" value="ECO:0007669"/>
    <property type="project" value="UniProtKB-UniRule"/>
</dbReference>
<dbReference type="CDD" id="cd00337">
    <property type="entry name" value="Ribosomal_uL14"/>
    <property type="match status" value="1"/>
</dbReference>
<dbReference type="FunFam" id="2.40.150.20:FF:000001">
    <property type="entry name" value="50S ribosomal protein L14"/>
    <property type="match status" value="1"/>
</dbReference>
<dbReference type="Gene3D" id="2.40.150.20">
    <property type="entry name" value="Ribosomal protein L14"/>
    <property type="match status" value="1"/>
</dbReference>
<dbReference type="HAMAP" id="MF_01367">
    <property type="entry name" value="Ribosomal_uL14"/>
    <property type="match status" value="1"/>
</dbReference>
<dbReference type="InterPro" id="IPR000218">
    <property type="entry name" value="Ribosomal_uL14"/>
</dbReference>
<dbReference type="InterPro" id="IPR005745">
    <property type="entry name" value="Ribosomal_uL14_bac-type"/>
</dbReference>
<dbReference type="InterPro" id="IPR019972">
    <property type="entry name" value="Ribosomal_uL14_CS"/>
</dbReference>
<dbReference type="InterPro" id="IPR036853">
    <property type="entry name" value="Ribosomal_uL14_sf"/>
</dbReference>
<dbReference type="NCBIfam" id="TIGR01067">
    <property type="entry name" value="rplN_bact"/>
    <property type="match status" value="1"/>
</dbReference>
<dbReference type="PANTHER" id="PTHR11761">
    <property type="entry name" value="50S/60S RIBOSOMAL PROTEIN L14/L23"/>
    <property type="match status" value="1"/>
</dbReference>
<dbReference type="PANTHER" id="PTHR11761:SF3">
    <property type="entry name" value="LARGE RIBOSOMAL SUBUNIT PROTEIN UL14M"/>
    <property type="match status" value="1"/>
</dbReference>
<dbReference type="Pfam" id="PF00238">
    <property type="entry name" value="Ribosomal_L14"/>
    <property type="match status" value="1"/>
</dbReference>
<dbReference type="SMART" id="SM01374">
    <property type="entry name" value="Ribosomal_L14"/>
    <property type="match status" value="1"/>
</dbReference>
<dbReference type="SUPFAM" id="SSF50193">
    <property type="entry name" value="Ribosomal protein L14"/>
    <property type="match status" value="1"/>
</dbReference>
<dbReference type="PROSITE" id="PS00049">
    <property type="entry name" value="RIBOSOMAL_L14"/>
    <property type="match status" value="1"/>
</dbReference>
<gene>
    <name evidence="1" type="primary">rplN</name>
    <name type="ordered locus">CTA_0567</name>
</gene>
<name>RL14_CHLTA</name>
<accession>Q3KLH9</accession>
<protein>
    <recommendedName>
        <fullName evidence="1">Large ribosomal subunit protein uL14</fullName>
    </recommendedName>
    <alternativeName>
        <fullName evidence="2">50S ribosomal protein L14</fullName>
    </alternativeName>
</protein>
<organism>
    <name type="scientific">Chlamydia trachomatis serovar A (strain ATCC VR-571B / DSM 19440 / HAR-13)</name>
    <dbReference type="NCBI Taxonomy" id="315277"/>
    <lineage>
        <taxon>Bacteria</taxon>
        <taxon>Pseudomonadati</taxon>
        <taxon>Chlamydiota</taxon>
        <taxon>Chlamydiia</taxon>
        <taxon>Chlamydiales</taxon>
        <taxon>Chlamydiaceae</taxon>
        <taxon>Chlamydia/Chlamydophila group</taxon>
        <taxon>Chlamydia</taxon>
    </lineage>
</organism>
<comment type="function">
    <text evidence="1">Binds to 23S rRNA. Forms part of two intersubunit bridges in the 70S ribosome.</text>
</comment>
<comment type="subunit">
    <text evidence="1">Part of the 50S ribosomal subunit. Forms a cluster with proteins L3 and L19. In the 70S ribosome, L14 and L19 interact and together make contacts with the 16S rRNA in bridges B5 and B8.</text>
</comment>
<comment type="similarity">
    <text evidence="1">Belongs to the universal ribosomal protein uL14 family.</text>
</comment>
<feature type="chain" id="PRO_1000055553" description="Large ribosomal subunit protein uL14">
    <location>
        <begin position="1"/>
        <end position="122"/>
    </location>
</feature>
<reference key="1">
    <citation type="journal article" date="2005" name="Infect. Immun.">
        <title>Comparative genomic analysis of Chlamydia trachomatis oculotropic and genitotropic strains.</title>
        <authorList>
            <person name="Carlson J.H."/>
            <person name="Porcella S.F."/>
            <person name="McClarty G."/>
            <person name="Caldwell H.D."/>
        </authorList>
    </citation>
    <scope>NUCLEOTIDE SEQUENCE [LARGE SCALE GENOMIC DNA]</scope>
    <source>
        <strain>ATCC VR-571B / DSM 19440 / HAR-13</strain>
    </source>
</reference>
<evidence type="ECO:0000255" key="1">
    <source>
        <dbReference type="HAMAP-Rule" id="MF_01367"/>
    </source>
</evidence>
<evidence type="ECO:0000305" key="2"/>
<sequence length="122" mass="13443">MIQQESQLKVADNTGAKKVKCFKVLGGSRRRYATVGDVIVCSVRDVEPDSSVKKGDVVKAVIVRTRNDIHRKDGSTLRFDTNSCVIIDDKGNPKGTRIFGPIAREIRDRGFVKISSLAPEVI</sequence>